<sequence>MSILPIVTAPDDRLKQKSQPVLEFTDQTRKFMDDMLKTMYHEDGAGLAAVQVGVLKRILVIDIKDHDSVERPKDFYPLFIVNPEMIEKSEELIKSNEGCISVPGQRIEVARPESIKIRYLDYHGKSQELKANDWLARVIQHEYDHLEGKLMIDYLSNLKRDVVLRKLKKLKNNIV</sequence>
<organism>
    <name type="scientific">Rickettsia akari (strain Hartford)</name>
    <dbReference type="NCBI Taxonomy" id="293614"/>
    <lineage>
        <taxon>Bacteria</taxon>
        <taxon>Pseudomonadati</taxon>
        <taxon>Pseudomonadota</taxon>
        <taxon>Alphaproteobacteria</taxon>
        <taxon>Rickettsiales</taxon>
        <taxon>Rickettsiaceae</taxon>
        <taxon>Rickettsieae</taxon>
        <taxon>Rickettsia</taxon>
        <taxon>spotted fever group</taxon>
    </lineage>
</organism>
<evidence type="ECO:0000255" key="1">
    <source>
        <dbReference type="HAMAP-Rule" id="MF_00163"/>
    </source>
</evidence>
<gene>
    <name evidence="1" type="primary">def</name>
    <name type="ordered locus">A1C_01560</name>
</gene>
<accession>A8GMJ8</accession>
<proteinExistence type="inferred from homology"/>
<comment type="function">
    <text evidence="1">Removes the formyl group from the N-terminal Met of newly synthesized proteins. Requires at least a dipeptide for an efficient rate of reaction. N-terminal L-methionine is a prerequisite for activity but the enzyme has broad specificity at other positions.</text>
</comment>
<comment type="catalytic activity">
    <reaction evidence="1">
        <text>N-terminal N-formyl-L-methionyl-[peptide] + H2O = N-terminal L-methionyl-[peptide] + formate</text>
        <dbReference type="Rhea" id="RHEA:24420"/>
        <dbReference type="Rhea" id="RHEA-COMP:10639"/>
        <dbReference type="Rhea" id="RHEA-COMP:10640"/>
        <dbReference type="ChEBI" id="CHEBI:15377"/>
        <dbReference type="ChEBI" id="CHEBI:15740"/>
        <dbReference type="ChEBI" id="CHEBI:49298"/>
        <dbReference type="ChEBI" id="CHEBI:64731"/>
        <dbReference type="EC" id="3.5.1.88"/>
    </reaction>
</comment>
<comment type="cofactor">
    <cofactor evidence="1">
        <name>Fe(2+)</name>
        <dbReference type="ChEBI" id="CHEBI:29033"/>
    </cofactor>
    <text evidence="1">Binds 1 Fe(2+) ion.</text>
</comment>
<comment type="similarity">
    <text evidence="1">Belongs to the polypeptide deformylase family.</text>
</comment>
<dbReference type="EC" id="3.5.1.88" evidence="1"/>
<dbReference type="EMBL" id="CP000847">
    <property type="protein sequence ID" value="ABV74623.1"/>
    <property type="molecule type" value="Genomic_DNA"/>
</dbReference>
<dbReference type="RefSeq" id="WP_012149257.1">
    <property type="nucleotide sequence ID" value="NC_009881.1"/>
</dbReference>
<dbReference type="SMR" id="A8GMJ8"/>
<dbReference type="STRING" id="293614.A1C_01560"/>
<dbReference type="KEGG" id="rak:A1C_01560"/>
<dbReference type="eggNOG" id="COG0242">
    <property type="taxonomic scope" value="Bacteria"/>
</dbReference>
<dbReference type="HOGENOM" id="CLU_061901_2_2_5"/>
<dbReference type="Proteomes" id="UP000006830">
    <property type="component" value="Chromosome"/>
</dbReference>
<dbReference type="GO" id="GO:0046872">
    <property type="term" value="F:metal ion binding"/>
    <property type="evidence" value="ECO:0007669"/>
    <property type="project" value="UniProtKB-KW"/>
</dbReference>
<dbReference type="GO" id="GO:0042586">
    <property type="term" value="F:peptide deformylase activity"/>
    <property type="evidence" value="ECO:0007669"/>
    <property type="project" value="UniProtKB-UniRule"/>
</dbReference>
<dbReference type="GO" id="GO:0006412">
    <property type="term" value="P:translation"/>
    <property type="evidence" value="ECO:0007669"/>
    <property type="project" value="UniProtKB-UniRule"/>
</dbReference>
<dbReference type="CDD" id="cd00487">
    <property type="entry name" value="Pep_deformylase"/>
    <property type="match status" value="1"/>
</dbReference>
<dbReference type="FunFam" id="3.90.45.10:FF:000005">
    <property type="entry name" value="Peptide deformylase"/>
    <property type="match status" value="1"/>
</dbReference>
<dbReference type="Gene3D" id="3.90.45.10">
    <property type="entry name" value="Peptide deformylase"/>
    <property type="match status" value="1"/>
</dbReference>
<dbReference type="HAMAP" id="MF_00163">
    <property type="entry name" value="Pep_deformylase"/>
    <property type="match status" value="1"/>
</dbReference>
<dbReference type="InterPro" id="IPR023635">
    <property type="entry name" value="Peptide_deformylase"/>
</dbReference>
<dbReference type="InterPro" id="IPR036821">
    <property type="entry name" value="Peptide_deformylase_sf"/>
</dbReference>
<dbReference type="NCBIfam" id="TIGR00079">
    <property type="entry name" value="pept_deformyl"/>
    <property type="match status" value="1"/>
</dbReference>
<dbReference type="NCBIfam" id="NF001159">
    <property type="entry name" value="PRK00150.1-3"/>
    <property type="match status" value="1"/>
</dbReference>
<dbReference type="PANTHER" id="PTHR10458">
    <property type="entry name" value="PEPTIDE DEFORMYLASE"/>
    <property type="match status" value="1"/>
</dbReference>
<dbReference type="PANTHER" id="PTHR10458:SF22">
    <property type="entry name" value="PEPTIDE DEFORMYLASE"/>
    <property type="match status" value="1"/>
</dbReference>
<dbReference type="Pfam" id="PF01327">
    <property type="entry name" value="Pep_deformylase"/>
    <property type="match status" value="1"/>
</dbReference>
<dbReference type="PIRSF" id="PIRSF004749">
    <property type="entry name" value="Pep_def"/>
    <property type="match status" value="1"/>
</dbReference>
<dbReference type="PRINTS" id="PR01576">
    <property type="entry name" value="PDEFORMYLASE"/>
</dbReference>
<dbReference type="SUPFAM" id="SSF56420">
    <property type="entry name" value="Peptide deformylase"/>
    <property type="match status" value="1"/>
</dbReference>
<protein>
    <recommendedName>
        <fullName evidence="1">Peptide deformylase</fullName>
        <shortName evidence="1">PDF</shortName>
        <ecNumber evidence="1">3.5.1.88</ecNumber>
    </recommendedName>
    <alternativeName>
        <fullName evidence="1">Polypeptide deformylase</fullName>
    </alternativeName>
</protein>
<reference key="1">
    <citation type="submission" date="2007-09" db="EMBL/GenBank/DDBJ databases">
        <title>Complete genome sequence of Rickettsia akari.</title>
        <authorList>
            <person name="Madan A."/>
            <person name="Fahey J."/>
            <person name="Helton E."/>
            <person name="Ketteman M."/>
            <person name="Madan A."/>
            <person name="Rodrigues S."/>
            <person name="Sanchez A."/>
            <person name="Whiting M."/>
            <person name="Dasch G."/>
            <person name="Eremeeva M."/>
        </authorList>
    </citation>
    <scope>NUCLEOTIDE SEQUENCE [LARGE SCALE GENOMIC DNA]</scope>
    <source>
        <strain>Hartford</strain>
    </source>
</reference>
<feature type="chain" id="PRO_1000023133" description="Peptide deformylase">
    <location>
        <begin position="1"/>
        <end position="175"/>
    </location>
</feature>
<feature type="active site" evidence="1">
    <location>
        <position position="142"/>
    </location>
</feature>
<feature type="binding site" evidence="1">
    <location>
        <position position="99"/>
    </location>
    <ligand>
        <name>Fe cation</name>
        <dbReference type="ChEBI" id="CHEBI:24875"/>
    </ligand>
</feature>
<feature type="binding site" evidence="1">
    <location>
        <position position="141"/>
    </location>
    <ligand>
        <name>Fe cation</name>
        <dbReference type="ChEBI" id="CHEBI:24875"/>
    </ligand>
</feature>
<feature type="binding site" evidence="1">
    <location>
        <position position="145"/>
    </location>
    <ligand>
        <name>Fe cation</name>
        <dbReference type="ChEBI" id="CHEBI:24875"/>
    </ligand>
</feature>
<keyword id="KW-0378">Hydrolase</keyword>
<keyword id="KW-0408">Iron</keyword>
<keyword id="KW-0479">Metal-binding</keyword>
<keyword id="KW-0648">Protein biosynthesis</keyword>
<name>DEF_RICAH</name>